<evidence type="ECO:0000255" key="1">
    <source>
        <dbReference type="HAMAP-Rule" id="MF_00038"/>
    </source>
</evidence>
<sequence length="360" mass="38645">MLYHLAMVLETFYSGFNVFQYITFRTILGVLTALGIALMIGPAVIQRLVLHQVGQQVRDDGPETHLEKAGTPTMGGALILVAIAVSTLLWADLTNRYVWVVLLVTLAFGLIGGVDDALKLARQDSQGLRARTKFSLQVLAALAASTFLFATATDPVETSLVLPLVKEWVFPLGLGFIALATLVIVGSSNAVNLTDGLDGLAIMPTVLVATGLAVFAYASGHHVFADYLGIPSVPGVGELVIFCGAIVGAGLGFLWYNTYPAQVFMGDVGALALGAALGVVAVAVRQEIVLFIMGGIFVMETVSVMIQVLSYKLTGRRVFRMAPLHHHYELKGWPEPRVIVRFWIITVVLVLIGLAMLKVR</sequence>
<comment type="function">
    <text evidence="1">Catalyzes the initial step of the lipid cycle reactions in the biosynthesis of the cell wall peptidoglycan: transfers peptidoglycan precursor phospho-MurNAc-pentapeptide from UDP-MurNAc-pentapeptide onto the lipid carrier undecaprenyl phosphate, yielding undecaprenyl-pyrophosphoryl-MurNAc-pentapeptide, known as lipid I.</text>
</comment>
<comment type="catalytic activity">
    <reaction evidence="1">
        <text>UDP-N-acetyl-alpha-D-muramoyl-L-alanyl-gamma-D-glutamyl-meso-2,6-diaminopimeloyl-D-alanyl-D-alanine + di-trans,octa-cis-undecaprenyl phosphate = di-trans,octa-cis-undecaprenyl diphospho-N-acetyl-alpha-D-muramoyl-L-alanyl-D-glutamyl-meso-2,6-diaminopimeloyl-D-alanyl-D-alanine + UMP</text>
        <dbReference type="Rhea" id="RHEA:28386"/>
        <dbReference type="ChEBI" id="CHEBI:57865"/>
        <dbReference type="ChEBI" id="CHEBI:60392"/>
        <dbReference type="ChEBI" id="CHEBI:61386"/>
        <dbReference type="ChEBI" id="CHEBI:61387"/>
        <dbReference type="EC" id="2.7.8.13"/>
    </reaction>
</comment>
<comment type="cofactor">
    <cofactor evidence="1">
        <name>Mg(2+)</name>
        <dbReference type="ChEBI" id="CHEBI:18420"/>
    </cofactor>
</comment>
<comment type="pathway">
    <text evidence="1">Cell wall biogenesis; peptidoglycan biosynthesis.</text>
</comment>
<comment type="subcellular location">
    <subcellularLocation>
        <location evidence="1">Cell inner membrane</location>
        <topology evidence="1">Multi-pass membrane protein</topology>
    </subcellularLocation>
</comment>
<comment type="similarity">
    <text evidence="1">Belongs to the glycosyltransferase 4 family. MraY subfamily.</text>
</comment>
<dbReference type="EC" id="2.7.8.13" evidence="1"/>
<dbReference type="EMBL" id="CP000544">
    <property type="protein sequence ID" value="ABM62858.1"/>
    <property type="molecule type" value="Genomic_DNA"/>
</dbReference>
<dbReference type="SMR" id="A1WYU6"/>
<dbReference type="STRING" id="349124.Hhal_2094"/>
<dbReference type="KEGG" id="hha:Hhal_2094"/>
<dbReference type="eggNOG" id="COG0472">
    <property type="taxonomic scope" value="Bacteria"/>
</dbReference>
<dbReference type="HOGENOM" id="CLU_023982_0_0_6"/>
<dbReference type="UniPathway" id="UPA00219"/>
<dbReference type="Proteomes" id="UP000000647">
    <property type="component" value="Chromosome"/>
</dbReference>
<dbReference type="GO" id="GO:0005886">
    <property type="term" value="C:plasma membrane"/>
    <property type="evidence" value="ECO:0007669"/>
    <property type="project" value="UniProtKB-SubCell"/>
</dbReference>
<dbReference type="GO" id="GO:0046872">
    <property type="term" value="F:metal ion binding"/>
    <property type="evidence" value="ECO:0007669"/>
    <property type="project" value="UniProtKB-KW"/>
</dbReference>
<dbReference type="GO" id="GO:0008963">
    <property type="term" value="F:phospho-N-acetylmuramoyl-pentapeptide-transferase activity"/>
    <property type="evidence" value="ECO:0007669"/>
    <property type="project" value="UniProtKB-UniRule"/>
</dbReference>
<dbReference type="GO" id="GO:0051992">
    <property type="term" value="F:UDP-N-acetylmuramoyl-L-alanyl-D-glutamyl-meso-2,6-diaminopimelyl-D-alanyl-D-alanine:undecaprenyl-phosphate transferase activity"/>
    <property type="evidence" value="ECO:0007669"/>
    <property type="project" value="RHEA"/>
</dbReference>
<dbReference type="GO" id="GO:0051301">
    <property type="term" value="P:cell division"/>
    <property type="evidence" value="ECO:0007669"/>
    <property type="project" value="UniProtKB-KW"/>
</dbReference>
<dbReference type="GO" id="GO:0071555">
    <property type="term" value="P:cell wall organization"/>
    <property type="evidence" value="ECO:0007669"/>
    <property type="project" value="UniProtKB-KW"/>
</dbReference>
<dbReference type="GO" id="GO:0009252">
    <property type="term" value="P:peptidoglycan biosynthetic process"/>
    <property type="evidence" value="ECO:0007669"/>
    <property type="project" value="UniProtKB-UniRule"/>
</dbReference>
<dbReference type="GO" id="GO:0008360">
    <property type="term" value="P:regulation of cell shape"/>
    <property type="evidence" value="ECO:0007669"/>
    <property type="project" value="UniProtKB-KW"/>
</dbReference>
<dbReference type="CDD" id="cd06852">
    <property type="entry name" value="GT_MraY"/>
    <property type="match status" value="1"/>
</dbReference>
<dbReference type="HAMAP" id="MF_00038">
    <property type="entry name" value="MraY"/>
    <property type="match status" value="1"/>
</dbReference>
<dbReference type="InterPro" id="IPR000715">
    <property type="entry name" value="Glycosyl_transferase_4"/>
</dbReference>
<dbReference type="InterPro" id="IPR003524">
    <property type="entry name" value="PNAcMuramoyl-5peptid_Trfase"/>
</dbReference>
<dbReference type="InterPro" id="IPR018480">
    <property type="entry name" value="PNAcMuramoyl-5peptid_Trfase_CS"/>
</dbReference>
<dbReference type="NCBIfam" id="TIGR00445">
    <property type="entry name" value="mraY"/>
    <property type="match status" value="1"/>
</dbReference>
<dbReference type="PANTHER" id="PTHR22926">
    <property type="entry name" value="PHOSPHO-N-ACETYLMURAMOYL-PENTAPEPTIDE-TRANSFERASE"/>
    <property type="match status" value="1"/>
</dbReference>
<dbReference type="PANTHER" id="PTHR22926:SF5">
    <property type="entry name" value="PHOSPHO-N-ACETYLMURAMOYL-PENTAPEPTIDE-TRANSFERASE HOMOLOG"/>
    <property type="match status" value="1"/>
</dbReference>
<dbReference type="Pfam" id="PF00953">
    <property type="entry name" value="Glycos_transf_4"/>
    <property type="match status" value="1"/>
</dbReference>
<dbReference type="Pfam" id="PF10555">
    <property type="entry name" value="MraY_sig1"/>
    <property type="match status" value="1"/>
</dbReference>
<dbReference type="PROSITE" id="PS01347">
    <property type="entry name" value="MRAY_1"/>
    <property type="match status" value="1"/>
</dbReference>
<dbReference type="PROSITE" id="PS01348">
    <property type="entry name" value="MRAY_2"/>
    <property type="match status" value="1"/>
</dbReference>
<feature type="chain" id="PRO_1000002987" description="Phospho-N-acetylmuramoyl-pentapeptide-transferase">
    <location>
        <begin position="1"/>
        <end position="360"/>
    </location>
</feature>
<feature type="transmembrane region" description="Helical" evidence="1">
    <location>
        <begin position="26"/>
        <end position="46"/>
    </location>
</feature>
<feature type="transmembrane region" description="Helical" evidence="1">
    <location>
        <begin position="73"/>
        <end position="93"/>
    </location>
</feature>
<feature type="transmembrane region" description="Helical" evidence="1">
    <location>
        <begin position="98"/>
        <end position="118"/>
    </location>
</feature>
<feature type="transmembrane region" description="Helical" evidence="1">
    <location>
        <begin position="136"/>
        <end position="156"/>
    </location>
</feature>
<feature type="transmembrane region" description="Helical" evidence="1">
    <location>
        <begin position="168"/>
        <end position="188"/>
    </location>
</feature>
<feature type="transmembrane region" description="Helical" evidence="1">
    <location>
        <begin position="199"/>
        <end position="219"/>
    </location>
</feature>
<feature type="transmembrane region" description="Helical" evidence="1">
    <location>
        <begin position="235"/>
        <end position="255"/>
    </location>
</feature>
<feature type="transmembrane region" description="Helical" evidence="1">
    <location>
        <begin position="263"/>
        <end position="283"/>
    </location>
</feature>
<feature type="transmembrane region" description="Helical" evidence="1">
    <location>
        <begin position="288"/>
        <end position="308"/>
    </location>
</feature>
<feature type="transmembrane region" description="Helical" evidence="1">
    <location>
        <begin position="338"/>
        <end position="358"/>
    </location>
</feature>
<accession>A1WYU6</accession>
<name>MRAY_HALHL</name>
<keyword id="KW-0131">Cell cycle</keyword>
<keyword id="KW-0132">Cell division</keyword>
<keyword id="KW-0997">Cell inner membrane</keyword>
<keyword id="KW-1003">Cell membrane</keyword>
<keyword id="KW-0133">Cell shape</keyword>
<keyword id="KW-0961">Cell wall biogenesis/degradation</keyword>
<keyword id="KW-0460">Magnesium</keyword>
<keyword id="KW-0472">Membrane</keyword>
<keyword id="KW-0479">Metal-binding</keyword>
<keyword id="KW-0573">Peptidoglycan synthesis</keyword>
<keyword id="KW-1185">Reference proteome</keyword>
<keyword id="KW-0808">Transferase</keyword>
<keyword id="KW-0812">Transmembrane</keyword>
<keyword id="KW-1133">Transmembrane helix</keyword>
<gene>
    <name evidence="1" type="primary">mraY</name>
    <name type="ordered locus">Hhal_2094</name>
</gene>
<organism>
    <name type="scientific">Halorhodospira halophila (strain DSM 244 / SL1)</name>
    <name type="common">Ectothiorhodospira halophila (strain DSM 244 / SL1)</name>
    <dbReference type="NCBI Taxonomy" id="349124"/>
    <lineage>
        <taxon>Bacteria</taxon>
        <taxon>Pseudomonadati</taxon>
        <taxon>Pseudomonadota</taxon>
        <taxon>Gammaproteobacteria</taxon>
        <taxon>Chromatiales</taxon>
        <taxon>Ectothiorhodospiraceae</taxon>
        <taxon>Halorhodospira</taxon>
    </lineage>
</organism>
<protein>
    <recommendedName>
        <fullName evidence="1">Phospho-N-acetylmuramoyl-pentapeptide-transferase</fullName>
        <ecNumber evidence="1">2.7.8.13</ecNumber>
    </recommendedName>
    <alternativeName>
        <fullName evidence="1">UDP-MurNAc-pentapeptide phosphotransferase</fullName>
    </alternativeName>
</protein>
<proteinExistence type="inferred from homology"/>
<reference key="1">
    <citation type="submission" date="2006-12" db="EMBL/GenBank/DDBJ databases">
        <title>Complete sequence of Halorhodospira halophila SL1.</title>
        <authorList>
            <consortium name="US DOE Joint Genome Institute"/>
            <person name="Copeland A."/>
            <person name="Lucas S."/>
            <person name="Lapidus A."/>
            <person name="Barry K."/>
            <person name="Detter J.C."/>
            <person name="Glavina del Rio T."/>
            <person name="Hammon N."/>
            <person name="Israni S."/>
            <person name="Dalin E."/>
            <person name="Tice H."/>
            <person name="Pitluck S."/>
            <person name="Saunders E."/>
            <person name="Brettin T."/>
            <person name="Bruce D."/>
            <person name="Han C."/>
            <person name="Tapia R."/>
            <person name="Schmutz J."/>
            <person name="Larimer F."/>
            <person name="Land M."/>
            <person name="Hauser L."/>
            <person name="Kyrpides N."/>
            <person name="Mikhailova N."/>
            <person name="Hoff W."/>
            <person name="Richardson P."/>
        </authorList>
    </citation>
    <scope>NUCLEOTIDE SEQUENCE [LARGE SCALE GENOMIC DNA]</scope>
    <source>
        <strain>DSM 244 / SL1</strain>
    </source>
</reference>